<sequence>MSNLLTVHQNLPALPVDATSDEVRKNLMDMFRDRQAFSEHTWKMLLSVCRSWAAWCKLNNRKWFPAEPEDVRDYLLYLQARGLAVKTIQQHLGQLNMLHRRSGLPRPSDSNAVSLVMRRIRKENVDAGERAKQALAFERTDFDQVRSLMENSDRCQDIRNLAFLGIAYNTLLRIAEIARIRVKDISRTDGGRMLIHIGRTKTLVSTAGVEKALSLGVTKLVERWISVSGVADDPNNYLFCRVRKNGVAAPSATSQLSTRALEGIFEATHRLIYGAKDDSGQRYLAWSGHSARVGAARDMARAGVSIPEIMQAGGWTNVNIVMNYIRNLDSETGAMVRLLEDGD</sequence>
<organismHost>
    <name type="scientific">Enterobacteriaceae</name>
    <dbReference type="NCBI Taxonomy" id="543"/>
</organismHost>
<feature type="chain" id="PRO_0000197529" description="Recombinase cre">
    <location>
        <begin position="1"/>
        <end position="343"/>
    </location>
</feature>
<feature type="domain" description="Core-binding (CB)" evidence="2">
    <location>
        <begin position="18"/>
        <end position="103"/>
    </location>
</feature>
<feature type="domain" description="Tyr recombinase" evidence="1">
    <location>
        <begin position="130"/>
        <end position="338"/>
    </location>
</feature>
<feature type="active site" evidence="1">
    <location>
        <position position="173"/>
    </location>
</feature>
<feature type="active site" evidence="1">
    <location>
        <position position="289"/>
    </location>
</feature>
<feature type="active site" evidence="1">
    <location>
        <position position="292"/>
    </location>
</feature>
<feature type="active site" evidence="1">
    <location>
        <position position="315"/>
    </location>
</feature>
<feature type="active site" description="O-(3'-phospho-DNA)-tyrosine intermediate" evidence="1">
    <location>
        <position position="324"/>
    </location>
</feature>
<feature type="turn" evidence="8">
    <location>
        <begin position="16"/>
        <end position="18"/>
    </location>
</feature>
<feature type="helix" evidence="9">
    <location>
        <begin position="21"/>
        <end position="32"/>
    </location>
</feature>
<feature type="helix" evidence="9">
    <location>
        <begin position="34"/>
        <end position="36"/>
    </location>
</feature>
<feature type="helix" evidence="9">
    <location>
        <begin position="39"/>
        <end position="59"/>
    </location>
</feature>
<feature type="turn" evidence="4">
    <location>
        <begin position="63"/>
        <end position="66"/>
    </location>
</feature>
<feature type="helix" evidence="9">
    <location>
        <begin position="68"/>
        <end position="80"/>
    </location>
</feature>
<feature type="helix" evidence="9">
    <location>
        <begin position="85"/>
        <end position="102"/>
    </location>
</feature>
<feature type="helix" evidence="9">
    <location>
        <begin position="107"/>
        <end position="109"/>
    </location>
</feature>
<feature type="helix" evidence="9">
    <location>
        <begin position="111"/>
        <end position="126"/>
    </location>
</feature>
<feature type="helix" evidence="9">
    <location>
        <begin position="139"/>
        <end position="149"/>
    </location>
</feature>
<feature type="helix" evidence="9">
    <location>
        <begin position="155"/>
        <end position="170"/>
    </location>
</feature>
<feature type="helix" evidence="9">
    <location>
        <begin position="174"/>
        <end position="179"/>
    </location>
</feature>
<feature type="helix" evidence="9">
    <location>
        <begin position="182"/>
        <end position="184"/>
    </location>
</feature>
<feature type="strand" evidence="9">
    <location>
        <begin position="185"/>
        <end position="189"/>
    </location>
</feature>
<feature type="strand" evidence="9">
    <location>
        <begin position="192"/>
        <end position="197"/>
    </location>
</feature>
<feature type="strand" evidence="9">
    <location>
        <begin position="202"/>
        <end position="205"/>
    </location>
</feature>
<feature type="strand" evidence="9">
    <location>
        <begin position="209"/>
        <end position="213"/>
    </location>
</feature>
<feature type="helix" evidence="9">
    <location>
        <begin position="215"/>
        <end position="228"/>
    </location>
</feature>
<feature type="helix" evidence="9">
    <location>
        <begin position="230"/>
        <end position="232"/>
    </location>
</feature>
<feature type="strand" evidence="7">
    <location>
        <begin position="233"/>
        <end position="235"/>
    </location>
</feature>
<feature type="strand" evidence="9">
    <location>
        <begin position="236"/>
        <end position="239"/>
    </location>
</feature>
<feature type="strand" evidence="10">
    <location>
        <begin position="241"/>
        <end position="243"/>
    </location>
</feature>
<feature type="turn" evidence="10">
    <location>
        <begin position="244"/>
        <end position="246"/>
    </location>
</feature>
<feature type="strand" evidence="10">
    <location>
        <begin position="247"/>
        <end position="249"/>
    </location>
</feature>
<feature type="strand" evidence="10">
    <location>
        <begin position="252"/>
        <end position="254"/>
    </location>
</feature>
<feature type="helix" evidence="9">
    <location>
        <begin position="258"/>
        <end position="273"/>
    </location>
</feature>
<feature type="strand" evidence="6">
    <location>
        <begin position="278"/>
        <end position="280"/>
    </location>
</feature>
<feature type="strand" evidence="5">
    <location>
        <begin position="282"/>
        <end position="285"/>
    </location>
</feature>
<feature type="helix" evidence="9">
    <location>
        <begin position="290"/>
        <end position="301"/>
    </location>
</feature>
<feature type="helix" evidence="9">
    <location>
        <begin position="306"/>
        <end position="313"/>
    </location>
</feature>
<feature type="strand" evidence="9">
    <location>
        <begin position="316"/>
        <end position="320"/>
    </location>
</feature>
<feature type="helix" evidence="9">
    <location>
        <begin position="321"/>
        <end position="324"/>
    </location>
</feature>
<feature type="turn" evidence="4">
    <location>
        <begin position="325"/>
        <end position="327"/>
    </location>
</feature>
<feature type="helix" evidence="9">
    <location>
        <begin position="329"/>
        <end position="331"/>
    </location>
</feature>
<feature type="helix" evidence="9">
    <location>
        <begin position="334"/>
        <end position="339"/>
    </location>
</feature>
<proteinExistence type="evidence at protein level"/>
<comment type="function">
    <text>Catalyzes site-specific recombination between two 34-base-pair LOXP sites. Its role is to maintain the phage genome as a monomeric unit-copy plasmid in the lysogenic state.</text>
</comment>
<comment type="subunit">
    <text>Homotetramer when bound to DNA.</text>
</comment>
<comment type="similarity">
    <text evidence="3">Belongs to the 'phage' integrase family.</text>
</comment>
<accession>P06956</accession>
<dbReference type="EMBL" id="X03453">
    <property type="protein sequence ID" value="CAA27178.1"/>
    <property type="molecule type" value="Genomic_DNA"/>
</dbReference>
<dbReference type="EMBL" id="AF234172">
    <property type="protein sequence ID" value="AAQ13978.1"/>
    <property type="molecule type" value="Genomic_DNA"/>
</dbReference>
<dbReference type="PIR" id="B24836">
    <property type="entry name" value="RGBPP1"/>
</dbReference>
<dbReference type="RefSeq" id="YP_006472.1">
    <property type="nucleotide sequence ID" value="NC_005856.1"/>
</dbReference>
<dbReference type="PDB" id="1CRX">
    <property type="method" value="X-ray"/>
    <property type="resolution" value="2.40 A"/>
    <property type="chains" value="A/B=20-341"/>
</dbReference>
<dbReference type="PDB" id="1DRG">
    <property type="method" value="X-ray"/>
    <property type="resolution" value="2.55 A"/>
    <property type="chains" value="A=21-343"/>
</dbReference>
<dbReference type="PDB" id="1F44">
    <property type="method" value="X-ray"/>
    <property type="resolution" value="2.05 A"/>
    <property type="chains" value="A=20-343"/>
</dbReference>
<dbReference type="PDB" id="1KBU">
    <property type="method" value="X-ray"/>
    <property type="resolution" value="2.20 A"/>
    <property type="chains" value="A/B=1-343"/>
</dbReference>
<dbReference type="PDB" id="1MA7">
    <property type="method" value="X-ray"/>
    <property type="resolution" value="2.30 A"/>
    <property type="chains" value="A/B=1-343"/>
</dbReference>
<dbReference type="PDB" id="1NZB">
    <property type="method" value="X-ray"/>
    <property type="resolution" value="3.10 A"/>
    <property type="chains" value="A/B/E/F=1-343"/>
</dbReference>
<dbReference type="PDB" id="1OUQ">
    <property type="method" value="X-ray"/>
    <property type="resolution" value="3.20 A"/>
    <property type="chains" value="A/B/E/F=1-343"/>
</dbReference>
<dbReference type="PDB" id="1PVP">
    <property type="method" value="X-ray"/>
    <property type="resolution" value="2.35 A"/>
    <property type="chains" value="A/B=2-343"/>
</dbReference>
<dbReference type="PDB" id="1PVQ">
    <property type="method" value="X-ray"/>
    <property type="resolution" value="2.75 A"/>
    <property type="chains" value="A/B=2-343"/>
</dbReference>
<dbReference type="PDB" id="1PVR">
    <property type="method" value="X-ray"/>
    <property type="resolution" value="2.65 A"/>
    <property type="chains" value="A/B=2-343"/>
</dbReference>
<dbReference type="PDB" id="1Q3U">
    <property type="method" value="X-ray"/>
    <property type="resolution" value="2.90 A"/>
    <property type="chains" value="A/B/E/F=1-343"/>
</dbReference>
<dbReference type="PDB" id="1Q3V">
    <property type="method" value="X-ray"/>
    <property type="resolution" value="2.91 A"/>
    <property type="chains" value="A/B/E/F=1-343"/>
</dbReference>
<dbReference type="PDB" id="1XNS">
    <property type="method" value="X-ray"/>
    <property type="resolution" value="2.80 A"/>
    <property type="chains" value="A/B=20-343"/>
</dbReference>
<dbReference type="PDB" id="1XO0">
    <property type="method" value="X-ray"/>
    <property type="resolution" value="2.00 A"/>
    <property type="chains" value="A/B=20-343"/>
</dbReference>
<dbReference type="PDB" id="2CRX">
    <property type="method" value="X-ray"/>
    <property type="resolution" value="2.50 A"/>
    <property type="chains" value="A/B=1-343"/>
</dbReference>
<dbReference type="PDB" id="2HOF">
    <property type="method" value="X-ray"/>
    <property type="resolution" value="2.40 A"/>
    <property type="chains" value="A/B=1-343"/>
</dbReference>
<dbReference type="PDB" id="2HOI">
    <property type="method" value="X-ray"/>
    <property type="resolution" value="2.60 A"/>
    <property type="chains" value="A/B/G/H=1-343"/>
</dbReference>
<dbReference type="PDB" id="3C28">
    <property type="method" value="X-ray"/>
    <property type="resolution" value="2.60 A"/>
    <property type="chains" value="A/B=20-341"/>
</dbReference>
<dbReference type="PDB" id="3C29">
    <property type="method" value="X-ray"/>
    <property type="resolution" value="2.20 A"/>
    <property type="chains" value="A/B/G/H=20-341"/>
</dbReference>
<dbReference type="PDB" id="3CRX">
    <property type="method" value="X-ray"/>
    <property type="resolution" value="2.50 A"/>
    <property type="chains" value="A/B=1-343"/>
</dbReference>
<dbReference type="PDB" id="3MGV">
    <property type="method" value="X-ray"/>
    <property type="resolution" value="2.29 A"/>
    <property type="chains" value="A/B/C/D=1-343"/>
</dbReference>
<dbReference type="PDB" id="4CRX">
    <property type="method" value="X-ray"/>
    <property type="resolution" value="2.20 A"/>
    <property type="chains" value="A/B=20-341"/>
</dbReference>
<dbReference type="PDB" id="5CRX">
    <property type="method" value="X-ray"/>
    <property type="resolution" value="2.70 A"/>
    <property type="chains" value="A/B=1-343"/>
</dbReference>
<dbReference type="PDB" id="7RHX">
    <property type="method" value="EM"/>
    <property type="resolution" value="3.23 A"/>
    <property type="chains" value="A/B/G/H=1-343"/>
</dbReference>
<dbReference type="PDB" id="7RHY">
    <property type="method" value="EM"/>
    <property type="resolution" value="3.91 A"/>
    <property type="chains" value="A=1-343"/>
</dbReference>
<dbReference type="PDB" id="7RHZ">
    <property type="method" value="EM"/>
    <property type="resolution" value="4.48 A"/>
    <property type="chains" value="A/B=1-343"/>
</dbReference>
<dbReference type="PDBsum" id="1CRX"/>
<dbReference type="PDBsum" id="1DRG"/>
<dbReference type="PDBsum" id="1F44"/>
<dbReference type="PDBsum" id="1KBU"/>
<dbReference type="PDBsum" id="1MA7"/>
<dbReference type="PDBsum" id="1NZB"/>
<dbReference type="PDBsum" id="1OUQ"/>
<dbReference type="PDBsum" id="1PVP"/>
<dbReference type="PDBsum" id="1PVQ"/>
<dbReference type="PDBsum" id="1PVR"/>
<dbReference type="PDBsum" id="1Q3U"/>
<dbReference type="PDBsum" id="1Q3V"/>
<dbReference type="PDBsum" id="1XNS"/>
<dbReference type="PDBsum" id="1XO0"/>
<dbReference type="PDBsum" id="2CRX"/>
<dbReference type="PDBsum" id="2HOF"/>
<dbReference type="PDBsum" id="2HOI"/>
<dbReference type="PDBsum" id="3C28"/>
<dbReference type="PDBsum" id="3C29"/>
<dbReference type="PDBsum" id="3CRX"/>
<dbReference type="PDBsum" id="3MGV"/>
<dbReference type="PDBsum" id="4CRX"/>
<dbReference type="PDBsum" id="5CRX"/>
<dbReference type="PDBsum" id="7RHX"/>
<dbReference type="PDBsum" id="7RHY"/>
<dbReference type="PDBsum" id="7RHZ"/>
<dbReference type="EMDB" id="EMD-24470"/>
<dbReference type="EMDB" id="EMD-24471"/>
<dbReference type="EMDB" id="EMD-24472"/>
<dbReference type="SMR" id="P06956"/>
<dbReference type="DNASU" id="2777477"/>
<dbReference type="GeneID" id="2777477"/>
<dbReference type="KEGG" id="vg:2777477"/>
<dbReference type="EvolutionaryTrace" id="P06956"/>
<dbReference type="Proteomes" id="UP000008091">
    <property type="component" value="Genome"/>
</dbReference>
<dbReference type="GO" id="GO:0003677">
    <property type="term" value="F:DNA binding"/>
    <property type="evidence" value="ECO:0007669"/>
    <property type="project" value="UniProtKB-KW"/>
</dbReference>
<dbReference type="GO" id="GO:0015074">
    <property type="term" value="P:DNA integration"/>
    <property type="evidence" value="ECO:0007669"/>
    <property type="project" value="UniProtKB-KW"/>
</dbReference>
<dbReference type="GO" id="GO:0006310">
    <property type="term" value="P:DNA recombination"/>
    <property type="evidence" value="ECO:0007669"/>
    <property type="project" value="UniProtKB-KW"/>
</dbReference>
<dbReference type="CDD" id="cd00799">
    <property type="entry name" value="INT_Cre_C"/>
    <property type="match status" value="1"/>
</dbReference>
<dbReference type="Gene3D" id="1.10.150.130">
    <property type="match status" value="1"/>
</dbReference>
<dbReference type="Gene3D" id="1.10.443.10">
    <property type="entry name" value="Intergrase catalytic core"/>
    <property type="match status" value="1"/>
</dbReference>
<dbReference type="InterPro" id="IPR044068">
    <property type="entry name" value="CB"/>
</dbReference>
<dbReference type="InterPro" id="IPR011010">
    <property type="entry name" value="DNA_brk_join_enz"/>
</dbReference>
<dbReference type="InterPro" id="IPR013762">
    <property type="entry name" value="Integrase-like_cat_sf"/>
</dbReference>
<dbReference type="InterPro" id="IPR002104">
    <property type="entry name" value="Integrase_catalytic"/>
</dbReference>
<dbReference type="InterPro" id="IPR010998">
    <property type="entry name" value="Integrase_recombinase_N"/>
</dbReference>
<dbReference type="InterPro" id="IPR052925">
    <property type="entry name" value="Phage_Integrase-like_Recomb"/>
</dbReference>
<dbReference type="PANTHER" id="PTHR34605:SF4">
    <property type="entry name" value="DNA ADENINE METHYLTRANSFERASE"/>
    <property type="match status" value="1"/>
</dbReference>
<dbReference type="PANTHER" id="PTHR34605">
    <property type="entry name" value="PHAGE_INTEGRASE DOMAIN-CONTAINING PROTEIN"/>
    <property type="match status" value="1"/>
</dbReference>
<dbReference type="Pfam" id="PF00589">
    <property type="entry name" value="Phage_integrase"/>
    <property type="match status" value="1"/>
</dbReference>
<dbReference type="SUPFAM" id="SSF56349">
    <property type="entry name" value="DNA breaking-rejoining enzymes"/>
    <property type="match status" value="1"/>
</dbReference>
<dbReference type="SUPFAM" id="SSF47823">
    <property type="entry name" value="lambda integrase-like, N-terminal domain"/>
    <property type="match status" value="1"/>
</dbReference>
<dbReference type="PROSITE" id="PS51900">
    <property type="entry name" value="CB"/>
    <property type="match status" value="1"/>
</dbReference>
<dbReference type="PROSITE" id="PS51898">
    <property type="entry name" value="TYR_RECOMBINASE"/>
    <property type="match status" value="1"/>
</dbReference>
<name>RECR_BPP1</name>
<organism>
    <name type="scientific">Escherichia phage P1</name>
    <name type="common">Bacteriophage P1</name>
    <dbReference type="NCBI Taxonomy" id="2886926"/>
    <lineage>
        <taxon>Viruses</taxon>
        <taxon>Duplodnaviria</taxon>
        <taxon>Heunggongvirae</taxon>
        <taxon>Uroviricota</taxon>
        <taxon>Caudoviricetes</taxon>
        <taxon>Punavirus</taxon>
        <taxon>Punavirus P1</taxon>
    </lineage>
</organism>
<keyword id="KW-0002">3D-structure</keyword>
<keyword id="KW-0229">DNA integration</keyword>
<keyword id="KW-0233">DNA recombination</keyword>
<keyword id="KW-0238">DNA-binding</keyword>
<keyword id="KW-1185">Reference proteome</keyword>
<evidence type="ECO:0000255" key="1">
    <source>
        <dbReference type="PROSITE-ProRule" id="PRU01246"/>
    </source>
</evidence>
<evidence type="ECO:0000255" key="2">
    <source>
        <dbReference type="PROSITE-ProRule" id="PRU01248"/>
    </source>
</evidence>
<evidence type="ECO:0000305" key="3"/>
<evidence type="ECO:0007829" key="4">
    <source>
        <dbReference type="PDB" id="1F44"/>
    </source>
</evidence>
<evidence type="ECO:0007829" key="5">
    <source>
        <dbReference type="PDB" id="1KBU"/>
    </source>
</evidence>
<evidence type="ECO:0007829" key="6">
    <source>
        <dbReference type="PDB" id="1PVP"/>
    </source>
</evidence>
<evidence type="ECO:0007829" key="7">
    <source>
        <dbReference type="PDB" id="1PVQ"/>
    </source>
</evidence>
<evidence type="ECO:0007829" key="8">
    <source>
        <dbReference type="PDB" id="1Q3U"/>
    </source>
</evidence>
<evidence type="ECO:0007829" key="9">
    <source>
        <dbReference type="PDB" id="1XO0"/>
    </source>
</evidence>
<evidence type="ECO:0007829" key="10">
    <source>
        <dbReference type="PDB" id="2CRX"/>
    </source>
</evidence>
<reference key="1">
    <citation type="journal article" date="1986" name="J. Mol. Biol.">
        <title>Bacteriophage P1 cre gene and its regulatory region. Evidence for multiple promoters and for regulation by DNA methylation.</title>
        <authorList>
            <person name="Sternberg N."/>
            <person name="Sauer B."/>
            <person name="Hoess R."/>
            <person name="Abremski K."/>
        </authorList>
    </citation>
    <scope>NUCLEOTIDE SEQUENCE [GENOMIC DNA]</scope>
</reference>
<reference key="2">
    <citation type="journal article" date="2004" name="J. Bacteriol.">
        <title>Genome of bacteriophage P1.</title>
        <authorList>
            <person name="Lobocka M.B."/>
            <person name="Rose D.J."/>
            <person name="Plunkett G. III"/>
            <person name="Rusin M."/>
            <person name="Samojedny A."/>
            <person name="Lehnherr H."/>
            <person name="Yarmolinsky M.B."/>
            <person name="Blattner F.R."/>
        </authorList>
    </citation>
    <scope>NUCLEOTIDE SEQUENCE [GENOMIC DNA]</scope>
</reference>
<reference key="3">
    <citation type="journal article" date="1997" name="Nature">
        <title>Structure of Cre recombinase complexed with DNA in a site-specific recombination synapse.</title>
        <authorList>
            <person name="Guo F."/>
            <person name="Gopaul D.N."/>
            <person name="van Duyne G.D."/>
        </authorList>
    </citation>
    <scope>X-RAY CRYSTALLOGRAPHY (2.4 ANGSTROMS)</scope>
</reference>
<reference key="4">
    <citation type="journal article" date="1998" name="EMBO J.">
        <title>Structure of the Holliday junction intermediate in Cre-loxP site-specific recombination.</title>
        <authorList>
            <person name="Gopaul D.N."/>
            <person name="Guo F."/>
            <person name="van Duyne G.D."/>
        </authorList>
    </citation>
    <scope>X-RAY CRYSTALLOGRAPHY (2.5 ANGSTROMS)</scope>
</reference>
<gene>
    <name type="primary">cre</name>
</gene>
<protein>
    <recommendedName>
        <fullName>Recombinase cre</fullName>
    </recommendedName>
</protein>